<name>EFTU_CHLRE</name>
<sequence>MSRAKFERKKPHVNIGTIGHVDHGKTTLTAAITMTLAAAGGSVGKKYDEIDSAPEEKARGITINTAHVEYETEKRHYAHVDCPGHADYVKNMITGAAQMDGAILVVSGADGPMPQTKEHILLAKQVGVPNVVVFLNKEDQVDDKELLELVELEVRETLDKYEFPGDEIPVVPGSALLALEALIENPKTQRGENKWVDKIYQLMDNVDSYIPTPQRETDKPFLLAVEDVLSITGRGTVATGRVERGALRISDNVEIVGLRPTQTAVVTGLEMFKKTLDETLAGDNVGVLLRGVQKKDIERGMVIAKPGTITPHTKFEAQVYVLTKEEGGRHSAFMIGYQPQFYVRTTDVTGKVVGFNHIQMRNPSSVAEEHSNKMAMPGDRISMTVELINPIAIEKGMRFAIREGGRTVGAGVVTNIVQ</sequence>
<organism>
    <name type="scientific">Chlamydomonas reinhardtii</name>
    <name type="common">Chlamydomonas smithii</name>
    <dbReference type="NCBI Taxonomy" id="3055"/>
    <lineage>
        <taxon>Eukaryota</taxon>
        <taxon>Viridiplantae</taxon>
        <taxon>Chlorophyta</taxon>
        <taxon>core chlorophytes</taxon>
        <taxon>Chlorophyceae</taxon>
        <taxon>CS clade</taxon>
        <taxon>Chlamydomonadales</taxon>
        <taxon>Chlamydomonadaceae</taxon>
        <taxon>Chlamydomonas</taxon>
    </lineage>
</organism>
<feature type="chain" id="PRO_0000091448" description="Elongation factor Tu, chloroplastic">
    <location>
        <begin position="1"/>
        <end position="418"/>
    </location>
</feature>
<feature type="domain" description="tr-type G">
    <location>
        <begin position="10"/>
        <end position="214"/>
    </location>
</feature>
<feature type="region of interest" description="G1" evidence="1">
    <location>
        <begin position="19"/>
        <end position="26"/>
    </location>
</feature>
<feature type="region of interest" description="G2" evidence="1">
    <location>
        <begin position="60"/>
        <end position="64"/>
    </location>
</feature>
<feature type="region of interest" description="G3" evidence="1">
    <location>
        <begin position="81"/>
        <end position="84"/>
    </location>
</feature>
<feature type="region of interest" description="G4" evidence="1">
    <location>
        <begin position="136"/>
        <end position="139"/>
    </location>
</feature>
<feature type="region of interest" description="G5" evidence="1">
    <location>
        <begin position="174"/>
        <end position="176"/>
    </location>
</feature>
<feature type="binding site" evidence="1">
    <location>
        <begin position="19"/>
        <end position="26"/>
    </location>
    <ligand>
        <name>GTP</name>
        <dbReference type="ChEBI" id="CHEBI:37565"/>
    </ligand>
</feature>
<feature type="binding site" evidence="2">
    <location>
        <position position="26"/>
    </location>
    <ligand>
        <name>Mg(2+)</name>
        <dbReference type="ChEBI" id="CHEBI:18420"/>
    </ligand>
</feature>
<feature type="binding site" evidence="1">
    <location>
        <begin position="81"/>
        <end position="85"/>
    </location>
    <ligand>
        <name>GTP</name>
        <dbReference type="ChEBI" id="CHEBI:37565"/>
    </ligand>
</feature>
<feature type="binding site" evidence="1">
    <location>
        <begin position="136"/>
        <end position="139"/>
    </location>
    <ligand>
        <name>GTP</name>
        <dbReference type="ChEBI" id="CHEBI:37565"/>
    </ligand>
</feature>
<accession>P17746</accession>
<accession>B7U1E8</accession>
<comment type="function">
    <text evidence="2">GTP hydrolase that promotes the GTP-dependent binding of aminoacyl-tRNA to the A-site of ribosomes during protein biosynthesis.</text>
</comment>
<comment type="catalytic activity">
    <reaction evidence="2">
        <text>GTP + H2O = GDP + phosphate + H(+)</text>
        <dbReference type="Rhea" id="RHEA:19669"/>
        <dbReference type="ChEBI" id="CHEBI:15377"/>
        <dbReference type="ChEBI" id="CHEBI:15378"/>
        <dbReference type="ChEBI" id="CHEBI:37565"/>
        <dbReference type="ChEBI" id="CHEBI:43474"/>
        <dbReference type="ChEBI" id="CHEBI:58189"/>
        <dbReference type="EC" id="3.6.5.3"/>
    </reaction>
    <physiologicalReaction direction="left-to-right" evidence="2">
        <dbReference type="Rhea" id="RHEA:19670"/>
    </physiologicalReaction>
</comment>
<comment type="subcellular location">
    <subcellularLocation>
        <location>Plastid</location>
        <location>Chloroplast</location>
    </subcellularLocation>
</comment>
<comment type="similarity">
    <text evidence="3">Belongs to the TRAFAC class translation factor GTPase superfamily. Classic translation factor GTPase family. EF-Tu/EF-1A subfamily.</text>
</comment>
<evidence type="ECO:0000250" key="1"/>
<evidence type="ECO:0000255" key="2">
    <source>
        <dbReference type="HAMAP-Rule" id="MF_00118"/>
    </source>
</evidence>
<evidence type="ECO:0000305" key="3"/>
<proteinExistence type="inferred from homology"/>
<dbReference type="EC" id="3.6.5.3" evidence="2"/>
<dbReference type="EMBL" id="X52257">
    <property type="protein sequence ID" value="CAA36499.1"/>
    <property type="molecule type" value="Genomic_DNA"/>
</dbReference>
<dbReference type="EMBL" id="FJ423446">
    <property type="protein sequence ID" value="ACJ50095.1"/>
    <property type="molecule type" value="Genomic_DNA"/>
</dbReference>
<dbReference type="EMBL" id="BK000554">
    <property type="protein sequence ID" value="DAA00908.1"/>
    <property type="molecule type" value="Genomic_DNA"/>
</dbReference>
<dbReference type="PIR" id="S09153">
    <property type="entry name" value="S09153"/>
</dbReference>
<dbReference type="RefSeq" id="NP_958362.1">
    <property type="nucleotide sequence ID" value="NC_005353.1"/>
</dbReference>
<dbReference type="SMR" id="P17746"/>
<dbReference type="FunCoup" id="P17746">
    <property type="interactions" value="1365"/>
</dbReference>
<dbReference type="STRING" id="3055.P17746"/>
<dbReference type="PaxDb" id="3055-DAA00908"/>
<dbReference type="ProMEX" id="P17746"/>
<dbReference type="GeneID" id="2716979"/>
<dbReference type="KEGG" id="cre:ChreCp005"/>
<dbReference type="eggNOG" id="KOG0460">
    <property type="taxonomic scope" value="Eukaryota"/>
</dbReference>
<dbReference type="HOGENOM" id="CLU_007265_0_0_1"/>
<dbReference type="InParanoid" id="P17746"/>
<dbReference type="Proteomes" id="UP000006906">
    <property type="component" value="Chloroplast"/>
</dbReference>
<dbReference type="GO" id="GO:0009507">
    <property type="term" value="C:chloroplast"/>
    <property type="evidence" value="ECO:0007669"/>
    <property type="project" value="UniProtKB-SubCell"/>
</dbReference>
<dbReference type="GO" id="GO:0005739">
    <property type="term" value="C:mitochondrion"/>
    <property type="evidence" value="ECO:0000318"/>
    <property type="project" value="GO_Central"/>
</dbReference>
<dbReference type="GO" id="GO:0005525">
    <property type="term" value="F:GTP binding"/>
    <property type="evidence" value="ECO:0007669"/>
    <property type="project" value="UniProtKB-UniRule"/>
</dbReference>
<dbReference type="GO" id="GO:0003924">
    <property type="term" value="F:GTPase activity"/>
    <property type="evidence" value="ECO:0007669"/>
    <property type="project" value="InterPro"/>
</dbReference>
<dbReference type="GO" id="GO:0003746">
    <property type="term" value="F:translation elongation factor activity"/>
    <property type="evidence" value="ECO:0000318"/>
    <property type="project" value="GO_Central"/>
</dbReference>
<dbReference type="GO" id="GO:0070125">
    <property type="term" value="P:mitochondrial translational elongation"/>
    <property type="evidence" value="ECO:0000318"/>
    <property type="project" value="GO_Central"/>
</dbReference>
<dbReference type="CDD" id="cd01884">
    <property type="entry name" value="EF_Tu"/>
    <property type="match status" value="1"/>
</dbReference>
<dbReference type="CDD" id="cd03697">
    <property type="entry name" value="EFTU_II"/>
    <property type="match status" value="1"/>
</dbReference>
<dbReference type="CDD" id="cd03707">
    <property type="entry name" value="EFTU_III"/>
    <property type="match status" value="1"/>
</dbReference>
<dbReference type="FunFam" id="2.40.30.10:FF:000001">
    <property type="entry name" value="Elongation factor Tu"/>
    <property type="match status" value="1"/>
</dbReference>
<dbReference type="FunFam" id="2.40.30.10:FF:000046">
    <property type="entry name" value="Elongation factor Tu"/>
    <property type="match status" value="1"/>
</dbReference>
<dbReference type="FunFam" id="3.40.50.300:FF:000003">
    <property type="entry name" value="Elongation factor Tu"/>
    <property type="match status" value="1"/>
</dbReference>
<dbReference type="Gene3D" id="3.40.50.300">
    <property type="entry name" value="P-loop containing nucleotide triphosphate hydrolases"/>
    <property type="match status" value="1"/>
</dbReference>
<dbReference type="Gene3D" id="2.40.30.10">
    <property type="entry name" value="Translation factors"/>
    <property type="match status" value="2"/>
</dbReference>
<dbReference type="HAMAP" id="MF_00118_B">
    <property type="entry name" value="EF_Tu_B"/>
    <property type="match status" value="1"/>
</dbReference>
<dbReference type="InterPro" id="IPR041709">
    <property type="entry name" value="EF-Tu_GTP-bd"/>
</dbReference>
<dbReference type="InterPro" id="IPR050055">
    <property type="entry name" value="EF-Tu_GTPase"/>
</dbReference>
<dbReference type="InterPro" id="IPR004161">
    <property type="entry name" value="EFTu-like_2"/>
</dbReference>
<dbReference type="InterPro" id="IPR033720">
    <property type="entry name" value="EFTU_2"/>
</dbReference>
<dbReference type="InterPro" id="IPR031157">
    <property type="entry name" value="G_TR_CS"/>
</dbReference>
<dbReference type="InterPro" id="IPR027417">
    <property type="entry name" value="P-loop_NTPase"/>
</dbReference>
<dbReference type="InterPro" id="IPR005225">
    <property type="entry name" value="Small_GTP-bd"/>
</dbReference>
<dbReference type="InterPro" id="IPR000795">
    <property type="entry name" value="T_Tr_GTP-bd_dom"/>
</dbReference>
<dbReference type="InterPro" id="IPR009000">
    <property type="entry name" value="Transl_B-barrel_sf"/>
</dbReference>
<dbReference type="InterPro" id="IPR009001">
    <property type="entry name" value="Transl_elong_EF1A/Init_IF2_C"/>
</dbReference>
<dbReference type="InterPro" id="IPR004541">
    <property type="entry name" value="Transl_elong_EFTu/EF1A_bac/org"/>
</dbReference>
<dbReference type="InterPro" id="IPR004160">
    <property type="entry name" value="Transl_elong_EFTu/EF1A_C"/>
</dbReference>
<dbReference type="NCBIfam" id="TIGR00485">
    <property type="entry name" value="EF-Tu"/>
    <property type="match status" value="1"/>
</dbReference>
<dbReference type="NCBIfam" id="NF000766">
    <property type="entry name" value="PRK00049.1"/>
    <property type="match status" value="1"/>
</dbReference>
<dbReference type="NCBIfam" id="NF009372">
    <property type="entry name" value="PRK12735.1"/>
    <property type="match status" value="1"/>
</dbReference>
<dbReference type="NCBIfam" id="NF009373">
    <property type="entry name" value="PRK12736.1"/>
    <property type="match status" value="1"/>
</dbReference>
<dbReference type="NCBIfam" id="TIGR00231">
    <property type="entry name" value="small_GTP"/>
    <property type="match status" value="1"/>
</dbReference>
<dbReference type="PANTHER" id="PTHR43721:SF5">
    <property type="entry name" value="ELONGATION FACTOR TU, CHLOROPLASTIC"/>
    <property type="match status" value="1"/>
</dbReference>
<dbReference type="PANTHER" id="PTHR43721">
    <property type="entry name" value="ELONGATION FACTOR TU-RELATED"/>
    <property type="match status" value="1"/>
</dbReference>
<dbReference type="Pfam" id="PF00009">
    <property type="entry name" value="GTP_EFTU"/>
    <property type="match status" value="1"/>
</dbReference>
<dbReference type="Pfam" id="PF03144">
    <property type="entry name" value="GTP_EFTU_D2"/>
    <property type="match status" value="1"/>
</dbReference>
<dbReference type="Pfam" id="PF03143">
    <property type="entry name" value="GTP_EFTU_D3"/>
    <property type="match status" value="1"/>
</dbReference>
<dbReference type="PRINTS" id="PR00315">
    <property type="entry name" value="ELONGATNFCT"/>
</dbReference>
<dbReference type="SUPFAM" id="SSF50465">
    <property type="entry name" value="EF-Tu/eEF-1alpha/eIF2-gamma C-terminal domain"/>
    <property type="match status" value="1"/>
</dbReference>
<dbReference type="SUPFAM" id="SSF52540">
    <property type="entry name" value="P-loop containing nucleoside triphosphate hydrolases"/>
    <property type="match status" value="1"/>
</dbReference>
<dbReference type="SUPFAM" id="SSF50447">
    <property type="entry name" value="Translation proteins"/>
    <property type="match status" value="1"/>
</dbReference>
<dbReference type="PROSITE" id="PS00301">
    <property type="entry name" value="G_TR_1"/>
    <property type="match status" value="1"/>
</dbReference>
<dbReference type="PROSITE" id="PS51722">
    <property type="entry name" value="G_TR_2"/>
    <property type="match status" value="1"/>
</dbReference>
<gene>
    <name type="primary">tufA</name>
</gene>
<keyword id="KW-0150">Chloroplast</keyword>
<keyword id="KW-0251">Elongation factor</keyword>
<keyword id="KW-0342">GTP-binding</keyword>
<keyword id="KW-0378">Hydrolase</keyword>
<keyword id="KW-0460">Magnesium</keyword>
<keyword id="KW-0479">Metal-binding</keyword>
<keyword id="KW-0547">Nucleotide-binding</keyword>
<keyword id="KW-0934">Plastid</keyword>
<keyword id="KW-0648">Protein biosynthesis</keyword>
<keyword id="KW-1185">Reference proteome</keyword>
<protein>
    <recommendedName>
        <fullName>Elongation factor Tu, chloroplastic</fullName>
        <shortName>EF-Tu</shortName>
        <ecNumber evidence="2">3.6.5.3</ecNumber>
    </recommendedName>
</protein>
<geneLocation type="chloroplast"/>
<reference key="1">
    <citation type="journal article" date="1990" name="Nature">
        <title>Evolutionary transfer of the chloroplast tufA gene to the nucleus.</title>
        <authorList>
            <person name="Baldauf S.L."/>
            <person name="Palmer J.D."/>
        </authorList>
    </citation>
    <scope>NUCLEOTIDE SEQUENCE [GENOMIC DNA]</scope>
    <source>
        <strain>cw15</strain>
    </source>
</reference>
<reference key="2">
    <citation type="journal article" date="2009" name="BMC Evol. Biol.">
        <title>Nucleotide diversity of the Chlamydomonas reinhardtii plastid genome: addressing the mutational-hazard hypothesis.</title>
        <authorList>
            <person name="Smith D.R."/>
            <person name="Lee R.W."/>
        </authorList>
    </citation>
    <scope>NUCLEOTIDE SEQUENCE [LARGE SCALE GENOMIC DNA]</scope>
    <source>
        <strain>CC-503</strain>
    </source>
</reference>
<reference key="3">
    <citation type="journal article" date="2002" name="Plant Cell">
        <title>The Chlamydomonas reinhardtii plastid chromosome: islands of genes in a sea of repeats.</title>
        <authorList>
            <person name="Maul J.E."/>
            <person name="Lilly J.W."/>
            <person name="Cui L."/>
            <person name="dePamphilis C.W."/>
            <person name="Miller W."/>
            <person name="Harris E.H."/>
            <person name="Stern D.B."/>
        </authorList>
    </citation>
    <scope>IDENTIFICATION</scope>
    <scope>COMPLETE PLASTID GENOME</scope>
</reference>